<keyword id="KW-0496">Mitochondrion</keyword>
<keyword id="KW-1185">Reference proteome</keyword>
<keyword id="KW-0687">Ribonucleoprotein</keyword>
<keyword id="KW-0689">Ribosomal protein</keyword>
<keyword id="KW-0809">Transit peptide</keyword>
<comment type="subunit">
    <text evidence="1">Component of the mitochondrial large ribosomal subunit. Mature mitochondrial ribosomes consist of a small (37S) and a large (54S) subunit. The 37S subunit contains at least 33 different proteins and 1 molecule of RNA (15S). The 54S subunit contains at least 45 different proteins and 1 molecule of RNA (21S) (By similarity).</text>
</comment>
<comment type="subcellular location">
    <subcellularLocation>
        <location evidence="1">Mitochondrion</location>
    </subcellularLocation>
</comment>
<comment type="similarity">
    <text evidence="4">Belongs to the universal ribosomal protein uL29 family.</text>
</comment>
<name>RM04_CHAGB</name>
<feature type="transit peptide" description="Mitochondrion" evidence="2">
    <location>
        <begin position="1"/>
        <end status="unknown"/>
    </location>
</feature>
<feature type="chain" id="PRO_0000372398" description="Large ribosomal subunit protein uL29m">
    <location>
        <begin status="unknown"/>
        <end position="272"/>
    </location>
</feature>
<feature type="region of interest" description="Disordered" evidence="3">
    <location>
        <begin position="1"/>
        <end position="29"/>
    </location>
</feature>
<feature type="region of interest" description="Disordered" evidence="3">
    <location>
        <begin position="56"/>
        <end position="87"/>
    </location>
</feature>
<feature type="region of interest" description="Disordered" evidence="3">
    <location>
        <begin position="227"/>
        <end position="272"/>
    </location>
</feature>
<feature type="compositionally biased region" description="Low complexity" evidence="3">
    <location>
        <begin position="17"/>
        <end position="29"/>
    </location>
</feature>
<feature type="compositionally biased region" description="Low complexity" evidence="3">
    <location>
        <begin position="227"/>
        <end position="238"/>
    </location>
</feature>
<feature type="compositionally biased region" description="Low complexity" evidence="3">
    <location>
        <begin position="249"/>
        <end position="259"/>
    </location>
</feature>
<feature type="compositionally biased region" description="Polar residues" evidence="3">
    <location>
        <begin position="260"/>
        <end position="272"/>
    </location>
</feature>
<gene>
    <name type="primary">MRPL4</name>
    <name type="ORF">CHGG_04816</name>
</gene>
<reference key="1">
    <citation type="journal article" date="2015" name="Genome Announc.">
        <title>Draft genome sequence of the cellulolytic fungus Chaetomium globosum.</title>
        <authorList>
            <person name="Cuomo C.A."/>
            <person name="Untereiner W.A."/>
            <person name="Ma L.-J."/>
            <person name="Grabherr M."/>
            <person name="Birren B.W."/>
        </authorList>
    </citation>
    <scope>NUCLEOTIDE SEQUENCE [LARGE SCALE GENOMIC DNA]</scope>
    <source>
        <strain>ATCC 6205 / CBS 148.51 / DSM 1962 / NBRC 6347 / NRRL 1970</strain>
    </source>
</reference>
<dbReference type="EMBL" id="CH408032">
    <property type="protein sequence ID" value="EAQ88197.1"/>
    <property type="molecule type" value="Genomic_DNA"/>
</dbReference>
<dbReference type="RefSeq" id="XP_001224030.1">
    <property type="nucleotide sequence ID" value="XM_001224029.1"/>
</dbReference>
<dbReference type="SMR" id="Q2H080"/>
<dbReference type="STRING" id="306901.Q2H080"/>
<dbReference type="GeneID" id="4392928"/>
<dbReference type="VEuPathDB" id="FungiDB:CHGG_04816"/>
<dbReference type="eggNOG" id="KOG3331">
    <property type="taxonomic scope" value="Eukaryota"/>
</dbReference>
<dbReference type="HOGENOM" id="CLU_063281_1_1_1"/>
<dbReference type="InParanoid" id="Q2H080"/>
<dbReference type="OMA" id="YAHGRAW"/>
<dbReference type="OrthoDB" id="270763at2759"/>
<dbReference type="Proteomes" id="UP000001056">
    <property type="component" value="Unassembled WGS sequence"/>
</dbReference>
<dbReference type="GO" id="GO:0005762">
    <property type="term" value="C:mitochondrial large ribosomal subunit"/>
    <property type="evidence" value="ECO:0007669"/>
    <property type="project" value="TreeGrafter"/>
</dbReference>
<dbReference type="GO" id="GO:0003735">
    <property type="term" value="F:structural constituent of ribosome"/>
    <property type="evidence" value="ECO:0007669"/>
    <property type="project" value="InterPro"/>
</dbReference>
<dbReference type="GO" id="GO:0032543">
    <property type="term" value="P:mitochondrial translation"/>
    <property type="evidence" value="ECO:0007669"/>
    <property type="project" value="TreeGrafter"/>
</dbReference>
<dbReference type="Gene3D" id="6.10.330.20">
    <property type="match status" value="1"/>
</dbReference>
<dbReference type="InterPro" id="IPR038340">
    <property type="entry name" value="MRP-L47_sf"/>
</dbReference>
<dbReference type="InterPro" id="IPR010729">
    <property type="entry name" value="Ribosomal_uL29_mit"/>
</dbReference>
<dbReference type="PANTHER" id="PTHR21183:SF18">
    <property type="entry name" value="LARGE RIBOSOMAL SUBUNIT PROTEIN UL29M"/>
    <property type="match status" value="1"/>
</dbReference>
<dbReference type="PANTHER" id="PTHR21183">
    <property type="entry name" value="RIBOSOMAL PROTEIN L47, MITOCHONDRIAL-RELATED"/>
    <property type="match status" value="1"/>
</dbReference>
<dbReference type="Pfam" id="PF06984">
    <property type="entry name" value="MRP-L47"/>
    <property type="match status" value="1"/>
</dbReference>
<evidence type="ECO:0000250" key="1"/>
<evidence type="ECO:0000255" key="2"/>
<evidence type="ECO:0000256" key="3">
    <source>
        <dbReference type="SAM" id="MobiDB-lite"/>
    </source>
</evidence>
<evidence type="ECO:0000305" key="4"/>
<organism>
    <name type="scientific">Chaetomium globosum (strain ATCC 6205 / CBS 148.51 / DSM 1962 / NBRC 6347 / NRRL 1970)</name>
    <name type="common">Soil fungus</name>
    <dbReference type="NCBI Taxonomy" id="306901"/>
    <lineage>
        <taxon>Eukaryota</taxon>
        <taxon>Fungi</taxon>
        <taxon>Dikarya</taxon>
        <taxon>Ascomycota</taxon>
        <taxon>Pezizomycotina</taxon>
        <taxon>Sordariomycetes</taxon>
        <taxon>Sordariomycetidae</taxon>
        <taxon>Sordariales</taxon>
        <taxon>Chaetomiaceae</taxon>
        <taxon>Chaetomium</taxon>
    </lineage>
</organism>
<accession>Q2H080</accession>
<protein>
    <recommendedName>
        <fullName evidence="4">Large ribosomal subunit protein uL29m</fullName>
    </recommendedName>
    <alternativeName>
        <fullName>54S ribosomal protein L4, mitochondrial</fullName>
    </alternativeName>
</protein>
<sequence>MAAAAMRPSMGALGRISSSTPSPLRPLTQTASLSTTAALLKRHKYREARVYRDNSKHRGESAIHRSGTRWRLSMSDEPLPRPVPRNKLPAIETDPDHGLWEFFQNRTMVVNSPPEIAKHGRSWTAEELRHKSWDDLHRLWWVCAKERNRIATANWERNKSGLGFGEAEMRERDNAVRQTMRSIKHVLTERFYTWEDAVKVAEKDPEVDLTGNGPAFTPSNFLEDSDAAATEGEQQAAEATEEAVEKAEPATAATPESATIPSSQQQTDTPRL</sequence>
<proteinExistence type="inferred from homology"/>